<reference key="1">
    <citation type="submission" date="1995-10" db="EMBL/GenBank/DDBJ databases">
        <authorList>
            <person name="Kovach M.E."/>
            <person name="Hughes K.J."/>
            <person name="Harkey C.W."/>
            <person name="Everiss K.D."/>
            <person name="Shaffer M.D."/>
            <person name="Peterson K.M."/>
        </authorList>
    </citation>
    <scope>NUCLEOTIDE SEQUENCE [GENOMIC DNA]</scope>
</reference>
<reference key="2">
    <citation type="submission" date="2007-03" db="EMBL/GenBank/DDBJ databases">
        <authorList>
            <person name="Heidelberg J."/>
        </authorList>
    </citation>
    <scope>NUCLEOTIDE SEQUENCE [LARGE SCALE GENOMIC DNA]</scope>
    <source>
        <strain>ATCC 39541 / Classical Ogawa 395 / O395</strain>
    </source>
</reference>
<reference key="3">
    <citation type="journal article" date="2008" name="PLoS ONE">
        <title>A recalibrated molecular clock and independent origins for the cholera pandemic clones.</title>
        <authorList>
            <person name="Feng L."/>
            <person name="Reeves P.R."/>
            <person name="Lan R."/>
            <person name="Ren Y."/>
            <person name="Gao C."/>
            <person name="Zhou Z."/>
            <person name="Ren Y."/>
            <person name="Cheng J."/>
            <person name="Wang W."/>
            <person name="Wang J."/>
            <person name="Qian W."/>
            <person name="Li D."/>
            <person name="Wang L."/>
        </authorList>
    </citation>
    <scope>NUCLEOTIDE SEQUENCE [LARGE SCALE GENOMIC DNA]</scope>
    <source>
        <strain>ATCC 39541 / Classical Ogawa 395 / O395</strain>
    </source>
</reference>
<comment type="similarity">
    <text evidence="1">Belongs to the UPF0125 (RnfH) family.</text>
</comment>
<comment type="sequence caution" evidence="1">
    <conflict type="erroneous initiation">
        <sequence resource="EMBL-CDS" id="ABQ22150"/>
    </conflict>
</comment>
<comment type="sequence caution" evidence="1">
    <conflict type="erroneous initiation">
        <sequence resource="EMBL-CDS" id="ACP08880"/>
    </conflict>
</comment>
<organism>
    <name type="scientific">Vibrio cholerae serotype O1 (strain ATCC 39541 / Classical Ogawa 395 / O395)</name>
    <dbReference type="NCBI Taxonomy" id="345073"/>
    <lineage>
        <taxon>Bacteria</taxon>
        <taxon>Pseudomonadati</taxon>
        <taxon>Pseudomonadota</taxon>
        <taxon>Gammaproteobacteria</taxon>
        <taxon>Vibrionales</taxon>
        <taxon>Vibrionaceae</taxon>
        <taxon>Vibrio</taxon>
    </lineage>
</organism>
<protein>
    <recommendedName>
        <fullName>UPF0125 protein VC0395_A0376/VC395_0866</fullName>
    </recommendedName>
</protein>
<proteinExistence type="inferred from homology"/>
<dbReference type="EMBL" id="U39068">
    <property type="protein sequence ID" value="AAA82717.1"/>
    <property type="molecule type" value="Genomic_DNA"/>
</dbReference>
<dbReference type="EMBL" id="CP000627">
    <property type="protein sequence ID" value="ABQ22150.1"/>
    <property type="status" value="ALT_INIT"/>
    <property type="molecule type" value="Genomic_DNA"/>
</dbReference>
<dbReference type="EMBL" id="CP001235">
    <property type="protein sequence ID" value="ACP08880.1"/>
    <property type="status" value="ALT_INIT"/>
    <property type="molecule type" value="Genomic_DNA"/>
</dbReference>
<dbReference type="RefSeq" id="WP_001918351.1">
    <property type="nucleotide sequence ID" value="NZ_JAACZH010000023.1"/>
</dbReference>
<dbReference type="SMR" id="A5F377"/>
<dbReference type="KEGG" id="vco:VC0395_A0376"/>
<dbReference type="KEGG" id="vcr:VC395_0866"/>
<dbReference type="PATRIC" id="fig|345073.21.peg.838"/>
<dbReference type="eggNOG" id="COG2914">
    <property type="taxonomic scope" value="Bacteria"/>
</dbReference>
<dbReference type="HOGENOM" id="CLU_150721_1_0_6"/>
<dbReference type="Proteomes" id="UP000000249">
    <property type="component" value="Chromosome 2"/>
</dbReference>
<dbReference type="Gene3D" id="3.10.20.280">
    <property type="entry name" value="RnfH-like"/>
    <property type="match status" value="1"/>
</dbReference>
<dbReference type="HAMAP" id="MF_00460">
    <property type="entry name" value="UPF0125_RnfH"/>
    <property type="match status" value="1"/>
</dbReference>
<dbReference type="InterPro" id="IPR016155">
    <property type="entry name" value="Mopterin_synth/thiamin_S_b"/>
</dbReference>
<dbReference type="InterPro" id="IPR005346">
    <property type="entry name" value="RnfH"/>
</dbReference>
<dbReference type="InterPro" id="IPR037021">
    <property type="entry name" value="RnfH_sf"/>
</dbReference>
<dbReference type="NCBIfam" id="NF002490">
    <property type="entry name" value="PRK01777.1"/>
    <property type="match status" value="1"/>
</dbReference>
<dbReference type="PANTHER" id="PTHR37483">
    <property type="entry name" value="UPF0125 PROTEIN RATB"/>
    <property type="match status" value="1"/>
</dbReference>
<dbReference type="PANTHER" id="PTHR37483:SF1">
    <property type="entry name" value="UPF0125 PROTEIN RATB"/>
    <property type="match status" value="1"/>
</dbReference>
<dbReference type="Pfam" id="PF03658">
    <property type="entry name" value="Ub-RnfH"/>
    <property type="match status" value="1"/>
</dbReference>
<dbReference type="SUPFAM" id="SSF54285">
    <property type="entry name" value="MoaD/ThiS"/>
    <property type="match status" value="1"/>
</dbReference>
<sequence length="101" mass="11613">MSSEMIHVEVVYALPHEQRVLKLVVEQSATVEEIIRTSGILQMYPEIDLTVNKVGIFSRNVKLDARVRDKDRIEIYRPLLADPKEIRRKRAEQAKAAANQS</sequence>
<gene>
    <name type="ordered locus">VC0395_A0376</name>
    <name type="ordered locus">VC395_0866</name>
</gene>
<accession>A5F377</accession>
<accession>C3LYL4</accession>
<accession>P52120</accession>
<accession>Q9KTQ1</accession>
<evidence type="ECO:0000305" key="1"/>
<feature type="chain" id="PRO_0000324778" description="UPF0125 protein VC0395_A0376/VC395_0866">
    <location>
        <begin position="1"/>
        <end position="101"/>
    </location>
</feature>
<name>Y1576_VIBC3</name>